<sequence length="581" mass="63267">MSGFVVWFTGLSGAGKSTLAAMLSAELRARSVHVEVLDGDEVRTNLSKGLGFSKEDRDTNIRRIGYVAKLIARSGACAMTAAISPYKAIRDEQRAQIPHFVEVFCSCEIPVLAERDAKGLYKKALAGEIKNFTGIDDPYEAPESPEVVVDTGKETKEESLAKILAKLEELGYVPRRGAAVAVSGAAAAGAAAGGARGLIAPHGGELVNRWVEGAAKASLAERAKGLPVIELDERTESDVEMIAIGAFSPLRGFMNSKDYLRVVREMRLESGLPWSMPITLAVSEQAAEGLRVGSEAALRARDGRIVAVIELSDKWRPNKELEAQEVFRTTETKHPGVAYLMSTGPVYLGGEIRVLERPVDSAFPAYDRSPATTRAYFAEKGWRRIVGFQTRNPIHRAHEFITKTALEICDGLMIHPLVGATKSDDIPADVRMRCYEELIAKYYVKDRVLLSIYPAAMRYAGPREAIFHALARKNYGCSHFIVGRDHAGVGSYYGTYDAQEIFNAFSPGELGITTLNFENAFYSTVVGAMATAKTAPGDASTQVNLSGTKVRELLQRGELPPPEFSRPEVARILIESMRSSS</sequence>
<name>SATC2_SORC5</name>
<feature type="chain" id="PRO_0000340642" description="Probable bifunctional SAT/APS kinase 2">
    <location>
        <begin position="1"/>
        <end position="581"/>
    </location>
</feature>
<feature type="region of interest" description="Adenylsulfate kinase">
    <location>
        <begin position="1"/>
        <end position="200"/>
    </location>
</feature>
<feature type="region of interest" description="Sulfate adenylyltransferase">
    <location>
        <begin position="201"/>
        <end position="581"/>
    </location>
</feature>
<feature type="active site" description="Phosphoserine intermediate" evidence="1">
    <location>
        <position position="84"/>
    </location>
</feature>
<feature type="binding site" evidence="1">
    <location>
        <begin position="10"/>
        <end position="17"/>
    </location>
    <ligand>
        <name>ATP</name>
        <dbReference type="ChEBI" id="CHEBI:30616"/>
    </ligand>
</feature>
<comment type="catalytic activity">
    <reaction>
        <text>sulfate + ATP + H(+) = adenosine 5'-phosphosulfate + diphosphate</text>
        <dbReference type="Rhea" id="RHEA:18133"/>
        <dbReference type="ChEBI" id="CHEBI:15378"/>
        <dbReference type="ChEBI" id="CHEBI:16189"/>
        <dbReference type="ChEBI" id="CHEBI:30616"/>
        <dbReference type="ChEBI" id="CHEBI:33019"/>
        <dbReference type="ChEBI" id="CHEBI:58243"/>
        <dbReference type="EC" id="2.7.7.4"/>
    </reaction>
</comment>
<comment type="catalytic activity">
    <reaction>
        <text>adenosine 5'-phosphosulfate + ATP = 3'-phosphoadenylyl sulfate + ADP + H(+)</text>
        <dbReference type="Rhea" id="RHEA:24152"/>
        <dbReference type="ChEBI" id="CHEBI:15378"/>
        <dbReference type="ChEBI" id="CHEBI:30616"/>
        <dbReference type="ChEBI" id="CHEBI:58243"/>
        <dbReference type="ChEBI" id="CHEBI:58339"/>
        <dbReference type="ChEBI" id="CHEBI:456216"/>
        <dbReference type="EC" id="2.7.1.25"/>
    </reaction>
</comment>
<comment type="pathway">
    <text>Sulfur metabolism; hydrogen sulfide biosynthesis; sulfite from sulfate: step 1/3.</text>
</comment>
<comment type="pathway">
    <text>Sulfur metabolism; hydrogen sulfide biosynthesis; sulfite from sulfate: step 2/3.</text>
</comment>
<comment type="similarity">
    <text evidence="2">In the N-terminal section; belongs to the APS kinase family.</text>
</comment>
<comment type="similarity">
    <text evidence="2">In the C-terminal section; belongs to the sulfate adenylyltransferase family.</text>
</comment>
<gene>
    <name type="primary">sat2/cysC2</name>
    <name type="ordered locus">sce5751</name>
</gene>
<reference key="1">
    <citation type="journal article" date="2007" name="Nat. Biotechnol.">
        <title>Complete genome sequence of the myxobacterium Sorangium cellulosum.</title>
        <authorList>
            <person name="Schneiker S."/>
            <person name="Perlova O."/>
            <person name="Kaiser O."/>
            <person name="Gerth K."/>
            <person name="Alici A."/>
            <person name="Altmeyer M.O."/>
            <person name="Bartels D."/>
            <person name="Bekel T."/>
            <person name="Beyer S."/>
            <person name="Bode E."/>
            <person name="Bode H.B."/>
            <person name="Bolten C.J."/>
            <person name="Choudhuri J.V."/>
            <person name="Doss S."/>
            <person name="Elnakady Y.A."/>
            <person name="Frank B."/>
            <person name="Gaigalat L."/>
            <person name="Goesmann A."/>
            <person name="Groeger C."/>
            <person name="Gross F."/>
            <person name="Jelsbak L."/>
            <person name="Jelsbak L."/>
            <person name="Kalinowski J."/>
            <person name="Kegler C."/>
            <person name="Knauber T."/>
            <person name="Konietzny S."/>
            <person name="Kopp M."/>
            <person name="Krause L."/>
            <person name="Krug D."/>
            <person name="Linke B."/>
            <person name="Mahmud T."/>
            <person name="Martinez-Arias R."/>
            <person name="McHardy A.C."/>
            <person name="Merai M."/>
            <person name="Meyer F."/>
            <person name="Mormann S."/>
            <person name="Munoz-Dorado J."/>
            <person name="Perez J."/>
            <person name="Pradella S."/>
            <person name="Rachid S."/>
            <person name="Raddatz G."/>
            <person name="Rosenau F."/>
            <person name="Rueckert C."/>
            <person name="Sasse F."/>
            <person name="Scharfe M."/>
            <person name="Schuster S.C."/>
            <person name="Suen G."/>
            <person name="Treuner-Lange A."/>
            <person name="Velicer G.J."/>
            <person name="Vorholter F.-J."/>
            <person name="Weissman K.J."/>
            <person name="Welch R.D."/>
            <person name="Wenzel S.C."/>
            <person name="Whitworth D.E."/>
            <person name="Wilhelm S."/>
            <person name="Wittmann C."/>
            <person name="Bloecker H."/>
            <person name="Puehler A."/>
            <person name="Mueller R."/>
        </authorList>
    </citation>
    <scope>NUCLEOTIDE SEQUENCE [LARGE SCALE GENOMIC DNA]</scope>
    <source>
        <strain>So ce56</strain>
    </source>
</reference>
<organism>
    <name type="scientific">Sorangium cellulosum (strain So ce56)</name>
    <name type="common">Polyangium cellulosum (strain So ce56)</name>
    <dbReference type="NCBI Taxonomy" id="448385"/>
    <lineage>
        <taxon>Bacteria</taxon>
        <taxon>Pseudomonadati</taxon>
        <taxon>Myxococcota</taxon>
        <taxon>Polyangia</taxon>
        <taxon>Polyangiales</taxon>
        <taxon>Polyangiaceae</taxon>
        <taxon>Sorangium</taxon>
    </lineage>
</organism>
<keyword id="KW-0067">ATP-binding</keyword>
<keyword id="KW-0418">Kinase</keyword>
<keyword id="KW-0511">Multifunctional enzyme</keyword>
<keyword id="KW-0547">Nucleotide-binding</keyword>
<keyword id="KW-0548">Nucleotidyltransferase</keyword>
<keyword id="KW-0597">Phosphoprotein</keyword>
<keyword id="KW-1185">Reference proteome</keyword>
<keyword id="KW-0808">Transferase</keyword>
<protein>
    <recommendedName>
        <fullName>Probable bifunctional SAT/APS kinase 2</fullName>
    </recommendedName>
    <domain>
        <recommendedName>
            <fullName>Adenylyl-sulfate kinase</fullName>
            <ecNumber>2.7.1.25</ecNumber>
        </recommendedName>
        <alternativeName>
            <fullName>APS kinase</fullName>
        </alternativeName>
        <alternativeName>
            <fullName>ATP adenosine-5'-phosphosulfate 3'-phosphotransferase</fullName>
        </alternativeName>
        <alternativeName>
            <fullName>Adenosine-5'-phosphosulfate kinase</fullName>
        </alternativeName>
    </domain>
    <domain>
        <recommendedName>
            <fullName>Sulfate adenylyltransferase</fullName>
            <ecNumber>2.7.7.4</ecNumber>
        </recommendedName>
        <alternativeName>
            <fullName>ATP-sulfurylase</fullName>
        </alternativeName>
        <alternativeName>
            <fullName>Sulfate adenylate transferase</fullName>
            <shortName>SAT</shortName>
        </alternativeName>
    </domain>
</protein>
<dbReference type="EC" id="2.7.1.25"/>
<dbReference type="EC" id="2.7.7.4"/>
<dbReference type="EMBL" id="AM746676">
    <property type="protein sequence ID" value="CAN95914.1"/>
    <property type="molecule type" value="Genomic_DNA"/>
</dbReference>
<dbReference type="RefSeq" id="WP_012238379.1">
    <property type="nucleotide sequence ID" value="NC_010162.1"/>
</dbReference>
<dbReference type="SMR" id="A9G7W0"/>
<dbReference type="STRING" id="448385.sce5751"/>
<dbReference type="KEGG" id="scl:sce5751"/>
<dbReference type="eggNOG" id="COG0529">
    <property type="taxonomic scope" value="Bacteria"/>
</dbReference>
<dbReference type="eggNOG" id="COG2046">
    <property type="taxonomic scope" value="Bacteria"/>
</dbReference>
<dbReference type="HOGENOM" id="CLU_438653_0_0_7"/>
<dbReference type="OrthoDB" id="9804504at2"/>
<dbReference type="UniPathway" id="UPA00140">
    <property type="reaction ID" value="UER00204"/>
</dbReference>
<dbReference type="UniPathway" id="UPA00140">
    <property type="reaction ID" value="UER00205"/>
</dbReference>
<dbReference type="Proteomes" id="UP000002139">
    <property type="component" value="Chromosome"/>
</dbReference>
<dbReference type="GO" id="GO:0005737">
    <property type="term" value="C:cytoplasm"/>
    <property type="evidence" value="ECO:0007669"/>
    <property type="project" value="TreeGrafter"/>
</dbReference>
<dbReference type="GO" id="GO:0004020">
    <property type="term" value="F:adenylylsulfate kinase activity"/>
    <property type="evidence" value="ECO:0007669"/>
    <property type="project" value="UniProtKB-UniRule"/>
</dbReference>
<dbReference type="GO" id="GO:0005524">
    <property type="term" value="F:ATP binding"/>
    <property type="evidence" value="ECO:0007669"/>
    <property type="project" value="UniProtKB-UniRule"/>
</dbReference>
<dbReference type="GO" id="GO:0004781">
    <property type="term" value="F:sulfate adenylyltransferase (ATP) activity"/>
    <property type="evidence" value="ECO:0007669"/>
    <property type="project" value="UniProtKB-UniRule"/>
</dbReference>
<dbReference type="GO" id="GO:0070814">
    <property type="term" value="P:hydrogen sulfide biosynthetic process"/>
    <property type="evidence" value="ECO:0007669"/>
    <property type="project" value="UniProtKB-UniRule"/>
</dbReference>
<dbReference type="GO" id="GO:0010134">
    <property type="term" value="P:sulfate assimilation via adenylyl sulfate reduction"/>
    <property type="evidence" value="ECO:0007669"/>
    <property type="project" value="TreeGrafter"/>
</dbReference>
<dbReference type="GO" id="GO:0019379">
    <property type="term" value="P:sulfate assimilation, phosphoadenylyl sulfate reduction by phosphoadenylyl-sulfate reductase (thioredoxin)"/>
    <property type="evidence" value="ECO:0007669"/>
    <property type="project" value="TreeGrafter"/>
</dbReference>
<dbReference type="CDD" id="cd02027">
    <property type="entry name" value="APSK"/>
    <property type="match status" value="1"/>
</dbReference>
<dbReference type="CDD" id="cd00517">
    <property type="entry name" value="ATPS"/>
    <property type="match status" value="1"/>
</dbReference>
<dbReference type="Gene3D" id="3.40.50.620">
    <property type="entry name" value="HUPs"/>
    <property type="match status" value="1"/>
</dbReference>
<dbReference type="Gene3D" id="3.40.50.300">
    <property type="entry name" value="P-loop containing nucleotide triphosphate hydrolases"/>
    <property type="match status" value="1"/>
</dbReference>
<dbReference type="Gene3D" id="3.10.400.10">
    <property type="entry name" value="Sulfate adenylyltransferase"/>
    <property type="match status" value="1"/>
</dbReference>
<dbReference type="HAMAP" id="MF_00065">
    <property type="entry name" value="Adenylyl_sulf_kinase"/>
    <property type="match status" value="1"/>
</dbReference>
<dbReference type="HAMAP" id="MF_00066">
    <property type="entry name" value="Sulf_adenylyltr"/>
    <property type="match status" value="1"/>
</dbReference>
<dbReference type="InterPro" id="IPR002891">
    <property type="entry name" value="APS_kinase"/>
</dbReference>
<dbReference type="InterPro" id="IPR025980">
    <property type="entry name" value="ATP-Sase_PUA-like_dom"/>
</dbReference>
<dbReference type="InterPro" id="IPR027417">
    <property type="entry name" value="P-loop_NTPase"/>
</dbReference>
<dbReference type="InterPro" id="IPR015947">
    <property type="entry name" value="PUA-like_sf"/>
</dbReference>
<dbReference type="InterPro" id="IPR014729">
    <property type="entry name" value="Rossmann-like_a/b/a_fold"/>
</dbReference>
<dbReference type="InterPro" id="IPR020792">
    <property type="entry name" value="SO4_adenylyltransferase_pro"/>
</dbReference>
<dbReference type="InterPro" id="IPR050512">
    <property type="entry name" value="Sulf_AdTrans/APS_kinase"/>
</dbReference>
<dbReference type="InterPro" id="IPR024951">
    <property type="entry name" value="Sulfurylase_cat_dom"/>
</dbReference>
<dbReference type="InterPro" id="IPR002650">
    <property type="entry name" value="Sulphate_adenylyltransferase"/>
</dbReference>
<dbReference type="NCBIfam" id="TIGR00455">
    <property type="entry name" value="apsK"/>
    <property type="match status" value="1"/>
</dbReference>
<dbReference type="NCBIfam" id="NF002059">
    <property type="entry name" value="PRK00889.1"/>
    <property type="match status" value="1"/>
</dbReference>
<dbReference type="NCBIfam" id="NF003013">
    <property type="entry name" value="PRK03846.1"/>
    <property type="match status" value="1"/>
</dbReference>
<dbReference type="NCBIfam" id="NF003166">
    <property type="entry name" value="PRK04149.1"/>
    <property type="match status" value="1"/>
</dbReference>
<dbReference type="NCBIfam" id="TIGR00339">
    <property type="entry name" value="sopT"/>
    <property type="match status" value="1"/>
</dbReference>
<dbReference type="PANTHER" id="PTHR42700">
    <property type="entry name" value="SULFATE ADENYLYLTRANSFERASE"/>
    <property type="match status" value="1"/>
</dbReference>
<dbReference type="PANTHER" id="PTHR42700:SF1">
    <property type="entry name" value="SULFATE ADENYLYLTRANSFERASE"/>
    <property type="match status" value="1"/>
</dbReference>
<dbReference type="Pfam" id="PF01583">
    <property type="entry name" value="APS_kinase"/>
    <property type="match status" value="1"/>
</dbReference>
<dbReference type="Pfam" id="PF01747">
    <property type="entry name" value="ATP-sulfurylase"/>
    <property type="match status" value="1"/>
</dbReference>
<dbReference type="Pfam" id="PF14306">
    <property type="entry name" value="PUA_2"/>
    <property type="match status" value="1"/>
</dbReference>
<dbReference type="SUPFAM" id="SSF52374">
    <property type="entry name" value="Nucleotidylyl transferase"/>
    <property type="match status" value="1"/>
</dbReference>
<dbReference type="SUPFAM" id="SSF52540">
    <property type="entry name" value="P-loop containing nucleoside triphosphate hydrolases"/>
    <property type="match status" value="1"/>
</dbReference>
<dbReference type="SUPFAM" id="SSF88697">
    <property type="entry name" value="PUA domain-like"/>
    <property type="match status" value="1"/>
</dbReference>
<accession>A9G7W0</accession>
<proteinExistence type="inferred from homology"/>
<evidence type="ECO:0000250" key="1"/>
<evidence type="ECO:0000305" key="2"/>